<comment type="function">
    <text evidence="3 5 8">Short-chain dehydrogenase/reductase; part of the gene cluster that mediates the biosynthesis of the cytotoxic leucine-containing cytochalasans, including aspochalasin C, aspochalasin E, TMC-169, flavichalasine F, aspergillin PZ, aspochalasin M and flavichalasine G (PubMed:32913332). The first step in the pathway is catalyzed by the hybrid PKS-NRPS ffsA that utilizes 8 units of malonyl-CoA to iteratively assemble the octaketide chain before addition of L-leucine by the C-terminal NRPS modules (PubMed:32913332). Because ffsA lacks a designated enoylreductase (ER) domain, the required activity is provided the enoyl reductase fssC (Probable). The methyltransferase (MT) domain of ffsA catalyzes the alpha-methylation at C10 and C14 using S-adenosyl-L-methionine as the methyl-donating cosubstrate (Probable). Reduction by the hydrolyase ffsE, followed by dehydration and intra-molecular Diels-Alder cyclization by the Diels-Alderase ffsF then yield the required isoindolone-fused macrocycle (By similarity). A number of oxidative steps catalyzed by the tailoring cytochrome P450 monooxygenase ffsD, the FAD-linked oxidoreductase ffsJ and the short-chain dehydrogenase/reductase ffsI, are further required to afford the final products (Probable).</text>
</comment>
<comment type="pathway">
    <text evidence="8">Mycotoxin biosynthesis.</text>
</comment>
<comment type="similarity">
    <text evidence="7">Belongs to the short-chain dehydrogenases/reductases (SDR) family.</text>
</comment>
<keyword id="KW-0521">NADP</keyword>
<keyword id="KW-0560">Oxidoreductase</keyword>
<reference key="1">
    <citation type="journal article" date="2020" name="J. Antibiot.">
        <title>Discovery and characterization of a cytochalasan biosynthetic cluster from the marine-derived fungus Aspergillus flavipes CNL-338.</title>
        <authorList>
            <person name="Heard S.C."/>
            <person name="Wu G."/>
            <person name="Winter J.M."/>
        </authorList>
    </citation>
    <scope>NUCLEOTIDE SEQUENCE [GENOMIC DNA]</scope>
    <scope>FUNCTION</scope>
    <scope>PATHWAY</scope>
    <source>
        <strain>CNL-338</strain>
    </source>
</reference>
<organism>
    <name type="scientific">Aspergillus flavipes</name>
    <dbReference type="NCBI Taxonomy" id="41900"/>
    <lineage>
        <taxon>Eukaryota</taxon>
        <taxon>Fungi</taxon>
        <taxon>Dikarya</taxon>
        <taxon>Ascomycota</taxon>
        <taxon>Pezizomycotina</taxon>
        <taxon>Eurotiomycetes</taxon>
        <taxon>Eurotiomycetidae</taxon>
        <taxon>Eurotiales</taxon>
        <taxon>Aspergillaceae</taxon>
        <taxon>Aspergillus</taxon>
        <taxon>Aspergillus subgen. Circumdati</taxon>
    </lineage>
</organism>
<accession>A0A7L8UXK7</accession>
<gene>
    <name evidence="6" type="primary">ffsI</name>
</gene>
<feature type="chain" id="PRO_0000454529" description="Short-chain dehydrogenase/reductase ffsI">
    <location>
        <begin position="1"/>
        <end position="340"/>
    </location>
</feature>
<feature type="active site" description="Proton acceptor" evidence="4">
    <location>
        <position position="211"/>
    </location>
</feature>
<feature type="active site" description="Lowers pKa of active site Tyr" evidence="2">
    <location>
        <position position="215"/>
    </location>
</feature>
<feature type="binding site" evidence="1">
    <location>
        <position position="46"/>
    </location>
    <ligand>
        <name>NADP(+)</name>
        <dbReference type="ChEBI" id="CHEBI:58349"/>
    </ligand>
</feature>
<feature type="binding site" evidence="1">
    <location>
        <position position="71"/>
    </location>
    <ligand>
        <name>NADP(+)</name>
        <dbReference type="ChEBI" id="CHEBI:58349"/>
    </ligand>
</feature>
<feature type="binding site" evidence="1">
    <location>
        <position position="96"/>
    </location>
    <ligand>
        <name>NADP(+)</name>
        <dbReference type="ChEBI" id="CHEBI:58349"/>
    </ligand>
</feature>
<feature type="binding site" evidence="2">
    <location>
        <position position="123"/>
    </location>
    <ligand>
        <name>NADP(+)</name>
        <dbReference type="ChEBI" id="CHEBI:58349"/>
    </ligand>
</feature>
<feature type="binding site" evidence="2">
    <location>
        <position position="211"/>
    </location>
    <ligand>
        <name>NADP(+)</name>
        <dbReference type="ChEBI" id="CHEBI:58349"/>
    </ligand>
</feature>
<feature type="binding site" evidence="2">
    <location>
        <position position="215"/>
    </location>
    <ligand>
        <name>NADP(+)</name>
        <dbReference type="ChEBI" id="CHEBI:58349"/>
    </ligand>
</feature>
<dbReference type="EC" id="1.1.1.-" evidence="8"/>
<dbReference type="EMBL" id="MT586757">
    <property type="protein sequence ID" value="QOG08946.1"/>
    <property type="molecule type" value="Genomic_DNA"/>
</dbReference>
<dbReference type="SMR" id="A0A7L8UXK7"/>
<dbReference type="GO" id="GO:0016491">
    <property type="term" value="F:oxidoreductase activity"/>
    <property type="evidence" value="ECO:0007669"/>
    <property type="project" value="UniProtKB-KW"/>
</dbReference>
<dbReference type="Gene3D" id="3.40.50.720">
    <property type="entry name" value="NAD(P)-binding Rossmann-like Domain"/>
    <property type="match status" value="1"/>
</dbReference>
<dbReference type="InterPro" id="IPR036291">
    <property type="entry name" value="NAD(P)-bd_dom_sf"/>
</dbReference>
<dbReference type="InterPro" id="IPR002347">
    <property type="entry name" value="SDR_fam"/>
</dbReference>
<dbReference type="PANTHER" id="PTHR43157">
    <property type="entry name" value="PHOSPHATIDYLINOSITOL-GLYCAN BIOSYNTHESIS CLASS F PROTEIN-RELATED"/>
    <property type="match status" value="1"/>
</dbReference>
<dbReference type="PANTHER" id="PTHR43157:SF22">
    <property type="entry name" value="SHORT-CHAIN DEHYDROGENASE_REDUCTASE PHMF"/>
    <property type="match status" value="1"/>
</dbReference>
<dbReference type="Pfam" id="PF00106">
    <property type="entry name" value="adh_short"/>
    <property type="match status" value="1"/>
</dbReference>
<dbReference type="SUPFAM" id="SSF51735">
    <property type="entry name" value="NAD(P)-binding Rossmann-fold domains"/>
    <property type="match status" value="1"/>
</dbReference>
<sequence>MAEAITSVPAKSSLSAFWWASKHPPADPTTSFAGKTILITGPNAGLGYEAALKFAALGASQLIFGVRSLARGKEAKASIEAKTKCAPSVIHLLQLDMASYASIESFAREVNSKFPVVHAAVLNAGVAPPAYKRSPEGWEMALQVNVISTAYLAILLLPKLRATGIAAGEPTHLEFVTSVGHGDVAVETVRDARSILGKVNEEANFKFTAQYSITKLLEMWVMRHVAAAARSSEVIVNGACPSLCKSSLGRDFSIMLRAPDSLMKAIIGRTAEQGSRILVSAVTTGQKAHGGFWSHDRIAVPGVLVTSDEGKKLSEQFWKEILDELSKQNPDVEKLLSESS</sequence>
<name>FFSI_ASPFV</name>
<evidence type="ECO:0000250" key="1">
    <source>
        <dbReference type="UniProtKB" id="L0E2Z4"/>
    </source>
</evidence>
<evidence type="ECO:0000250" key="2">
    <source>
        <dbReference type="UniProtKB" id="O93868"/>
    </source>
</evidence>
<evidence type="ECO:0000250" key="3">
    <source>
        <dbReference type="UniProtKB" id="Q0V6Q2"/>
    </source>
</evidence>
<evidence type="ECO:0000255" key="4">
    <source>
        <dbReference type="PROSITE-ProRule" id="PRU10001"/>
    </source>
</evidence>
<evidence type="ECO:0000269" key="5">
    <source>
    </source>
</evidence>
<evidence type="ECO:0000303" key="6">
    <source>
    </source>
</evidence>
<evidence type="ECO:0000305" key="7"/>
<evidence type="ECO:0000305" key="8">
    <source>
    </source>
</evidence>
<protein>
    <recommendedName>
        <fullName evidence="6">Short-chain dehydrogenase/reductase ffsI</fullName>
        <ecNumber evidence="8">1.1.1.-</ecNumber>
    </recommendedName>
    <alternativeName>
        <fullName evidence="6">Cytochalasans biosynthesis cluster protein ffsI</fullName>
    </alternativeName>
</protein>
<proteinExistence type="inferred from homology"/>